<protein>
    <recommendedName>
        <fullName evidence="5">Large ribosomal subunit protein eL39</fullName>
    </recommendedName>
    <alternativeName>
        <fullName>60S ribosomal protein L39</fullName>
    </alternativeName>
</protein>
<gene>
    <name type="primary">RPL39</name>
</gene>
<feature type="chain" id="PRO_0000127024" description="Large ribosomal subunit protein eL39">
    <location>
        <begin position="1"/>
        <end position="51"/>
    </location>
</feature>
<reference key="1">
    <citation type="journal article" date="1996" name="Biochem. Mol. Biol. Int.">
        <title>Primary structures and sequence analysis of human ribosomal proteins L39 and S27.</title>
        <authorList>
            <person name="Tsui S.K.W."/>
            <person name="Lee S.M.Y."/>
            <person name="Fung K.P."/>
            <person name="Waye M.M.Y."/>
            <person name="Lee C.Y."/>
        </authorList>
    </citation>
    <scope>NUCLEOTIDE SEQUENCE [MRNA]</scope>
    <source>
        <tissue>Heart</tissue>
    </source>
</reference>
<reference key="2">
    <citation type="journal article" date="1996" name="Biochim. Biophys. Acta">
        <title>Molecular cloning of a cDNA encoding human ribosomal protein L39.</title>
        <authorList>
            <person name="Otsuka S."/>
            <person name="Tanaka M."/>
            <person name="Saito S."/>
            <person name="Yoshimoto K."/>
            <person name="Itakura M."/>
        </authorList>
    </citation>
    <scope>NUCLEOTIDE SEQUENCE [MRNA]</scope>
    <scope>FUNCTION</scope>
    <source>
        <tissue>Colon</tissue>
    </source>
</reference>
<reference key="3">
    <citation type="journal article" date="2002" name="Genome Res.">
        <title>The human ribosomal protein genes: sequencing and comparative analysis of 73 genes.</title>
        <authorList>
            <person name="Yoshihama M."/>
            <person name="Uechi T."/>
            <person name="Asakawa S."/>
            <person name="Kawasaki K."/>
            <person name="Kato S."/>
            <person name="Higa S."/>
            <person name="Maeda N."/>
            <person name="Minoshima S."/>
            <person name="Tanaka T."/>
            <person name="Shimizu N."/>
            <person name="Kenmochi N."/>
        </authorList>
    </citation>
    <scope>NUCLEOTIDE SEQUENCE [GENOMIC DNA]</scope>
</reference>
<reference key="4">
    <citation type="journal article" date="2004" name="Genome Res.">
        <title>The status, quality, and expansion of the NIH full-length cDNA project: the Mammalian Gene Collection (MGC).</title>
        <authorList>
            <consortium name="The MGC Project Team"/>
        </authorList>
    </citation>
    <scope>NUCLEOTIDE SEQUENCE [LARGE SCALE MRNA]</scope>
    <source>
        <tissue>Eye</tissue>
    </source>
</reference>
<reference key="5">
    <citation type="journal article" date="2001" name="Genomics">
        <title>A complete map of the human ribosomal protein genes: assignment of 80 genes to the cytogenetic map and implications for human disorders.</title>
        <authorList>
            <person name="Uechi T."/>
            <person name="Tanaka T."/>
            <person name="Kenmochi N."/>
        </authorList>
    </citation>
    <scope>NUCLEOTIDE SEQUENCE [GENOMIC DNA] OF 1-17</scope>
</reference>
<reference key="6">
    <citation type="journal article" date="2014" name="Curr. Opin. Struct. Biol.">
        <title>A new system for naming ribosomal proteins.</title>
        <authorList>
            <person name="Ban N."/>
            <person name="Beckmann R."/>
            <person name="Cate J.H.D."/>
            <person name="Dinman J.D."/>
            <person name="Dragon F."/>
            <person name="Ellis S.R."/>
            <person name="Lafontaine D.L.J."/>
            <person name="Lindahl L."/>
            <person name="Liljas A."/>
            <person name="Lipton J.M."/>
            <person name="McAlear M.A."/>
            <person name="Moore P.B."/>
            <person name="Noller H.F."/>
            <person name="Ortega J."/>
            <person name="Panse V.G."/>
            <person name="Ramakrishnan V."/>
            <person name="Spahn C.M.T."/>
            <person name="Steitz T.A."/>
            <person name="Tchorzewski M."/>
            <person name="Tollervey D."/>
            <person name="Warren A.J."/>
            <person name="Williamson J.R."/>
            <person name="Wilson D."/>
            <person name="Yonath A."/>
            <person name="Yusupov M."/>
        </authorList>
    </citation>
    <scope>NOMENCLATURE</scope>
</reference>
<reference key="7">
    <citation type="journal article" date="2013" name="Nature">
        <title>Structures of the human and Drosophila 80S ribosome.</title>
        <authorList>
            <person name="Anger A.M."/>
            <person name="Armache J.P."/>
            <person name="Berninghausen O."/>
            <person name="Habeck M."/>
            <person name="Subklewe M."/>
            <person name="Wilson D.N."/>
            <person name="Beckmann R."/>
        </authorList>
    </citation>
    <scope>STRUCTURE BY ELECTRON MICROSCOPY (5.0 ANGSTROMS)</scope>
    <scope>FUNCTION</scope>
    <scope>SUBUNIT</scope>
    <scope>SUBCELLULAR LOCATION</scope>
</reference>
<reference evidence="7 8" key="8">
    <citation type="journal article" date="2020" name="Nat. Commun.">
        <title>Structural snapshots of human pre-60S ribosomal particles before and after nuclear export.</title>
        <authorList>
            <person name="Liang X."/>
            <person name="Zuo M.Q."/>
            <person name="Zhang Y."/>
            <person name="Li N."/>
            <person name="Ma C."/>
            <person name="Dong M.Q."/>
            <person name="Gao N."/>
        </authorList>
    </citation>
    <scope>STRUCTURE BY ELECTRON MICROSCOPY (3.09 ANGSTROMS)</scope>
    <scope>FUNCTION</scope>
    <scope>SUBUNIT</scope>
</reference>
<keyword id="KW-0002">3D-structure</keyword>
<keyword id="KW-0963">Cytoplasm</keyword>
<keyword id="KW-1267">Proteomics identification</keyword>
<keyword id="KW-1185">Reference proteome</keyword>
<keyword id="KW-0687">Ribonucleoprotein</keyword>
<keyword id="KW-0689">Ribosomal protein</keyword>
<name>RL39_HUMAN</name>
<comment type="function">
    <text evidence="2 3 4">RNA-binding component of the large ribosomal subunit. The ribosome is a large ribonucleoprotein complex responsible for the synthesis of proteins in the cell.</text>
</comment>
<comment type="subunit">
    <text evidence="1 2 3">Component of the large ribosomal subunit (PubMed:23636399, PubMed:32669547). Interacts with IMPACT (By similarity).</text>
</comment>
<comment type="subcellular location">
    <subcellularLocation>
        <location evidence="2">Cytoplasm</location>
    </subcellularLocation>
</comment>
<comment type="similarity">
    <text evidence="6">Belongs to the eukaryotic ribosomal protein eL39 family.</text>
</comment>
<accession>P62891</accession>
<accession>P02404</accession>
<accession>P39025</accession>
<accession>Q9BYF2</accession>
<organism>
    <name type="scientific">Homo sapiens</name>
    <name type="common">Human</name>
    <dbReference type="NCBI Taxonomy" id="9606"/>
    <lineage>
        <taxon>Eukaryota</taxon>
        <taxon>Metazoa</taxon>
        <taxon>Chordata</taxon>
        <taxon>Craniata</taxon>
        <taxon>Vertebrata</taxon>
        <taxon>Euteleostomi</taxon>
        <taxon>Mammalia</taxon>
        <taxon>Eutheria</taxon>
        <taxon>Euarchontoglires</taxon>
        <taxon>Primates</taxon>
        <taxon>Haplorrhini</taxon>
        <taxon>Catarrhini</taxon>
        <taxon>Hominidae</taxon>
        <taxon>Homo</taxon>
    </lineage>
</organism>
<evidence type="ECO:0000250" key="1">
    <source>
        <dbReference type="UniProtKB" id="P62892"/>
    </source>
</evidence>
<evidence type="ECO:0000269" key="2">
    <source>
    </source>
</evidence>
<evidence type="ECO:0000269" key="3">
    <source>
    </source>
</evidence>
<evidence type="ECO:0000269" key="4">
    <source>
    </source>
</evidence>
<evidence type="ECO:0000303" key="5">
    <source>
    </source>
</evidence>
<evidence type="ECO:0000305" key="6"/>
<evidence type="ECO:0007744" key="7">
    <source>
        <dbReference type="PDB" id="6LQM"/>
    </source>
</evidence>
<evidence type="ECO:0007744" key="8">
    <source>
        <dbReference type="PDB" id="6LSR"/>
    </source>
</evidence>
<dbReference type="EMBL" id="U57846">
    <property type="protein sequence ID" value="AAB02265.1"/>
    <property type="molecule type" value="mRNA"/>
</dbReference>
<dbReference type="EMBL" id="D79205">
    <property type="protein sequence ID" value="BAA11465.1"/>
    <property type="molecule type" value="mRNA"/>
</dbReference>
<dbReference type="EMBL" id="AB061835">
    <property type="protein sequence ID" value="BAB79473.1"/>
    <property type="molecule type" value="Genomic_DNA"/>
</dbReference>
<dbReference type="EMBL" id="BC001019">
    <property type="protein sequence ID" value="AAH01019.1"/>
    <property type="molecule type" value="mRNA"/>
</dbReference>
<dbReference type="EMBL" id="BC070205">
    <property type="protein sequence ID" value="AAH70205.1"/>
    <property type="molecule type" value="mRNA"/>
</dbReference>
<dbReference type="EMBL" id="AB046411">
    <property type="protein sequence ID" value="BAB21257.1"/>
    <property type="molecule type" value="Genomic_DNA"/>
</dbReference>
<dbReference type="CCDS" id="CCDS14586.1"/>
<dbReference type="PIR" id="G02654">
    <property type="entry name" value="G02654"/>
</dbReference>
<dbReference type="RefSeq" id="NP_000991.1">
    <property type="nucleotide sequence ID" value="NM_001000.4"/>
</dbReference>
<dbReference type="PDB" id="4UG0">
    <property type="method" value="EM"/>
    <property type="chains" value="Ll=1-51"/>
</dbReference>
<dbReference type="PDB" id="4V6X">
    <property type="method" value="EM"/>
    <property type="resolution" value="5.00 A"/>
    <property type="chains" value="Cl=1-51"/>
</dbReference>
<dbReference type="PDB" id="5AJ0">
    <property type="method" value="EM"/>
    <property type="resolution" value="3.50 A"/>
    <property type="chains" value="Al=1-51"/>
</dbReference>
<dbReference type="PDB" id="5LKS">
    <property type="method" value="EM"/>
    <property type="resolution" value="3.60 A"/>
    <property type="chains" value="Ll=1-51"/>
</dbReference>
<dbReference type="PDB" id="5T2C">
    <property type="method" value="EM"/>
    <property type="resolution" value="3.60 A"/>
    <property type="chains" value="f=1-51"/>
</dbReference>
<dbReference type="PDB" id="6IP5">
    <property type="method" value="EM"/>
    <property type="resolution" value="3.90 A"/>
    <property type="chains" value="2f=1-51"/>
</dbReference>
<dbReference type="PDB" id="6IP6">
    <property type="method" value="EM"/>
    <property type="resolution" value="4.50 A"/>
    <property type="chains" value="2f=1-51"/>
</dbReference>
<dbReference type="PDB" id="6IP8">
    <property type="method" value="EM"/>
    <property type="resolution" value="3.90 A"/>
    <property type="chains" value="2f=1-51"/>
</dbReference>
<dbReference type="PDB" id="6LQM">
    <property type="method" value="EM"/>
    <property type="resolution" value="3.09 A"/>
    <property type="chains" value="P=1-51"/>
</dbReference>
<dbReference type="PDB" id="6LSR">
    <property type="method" value="EM"/>
    <property type="resolution" value="3.13 A"/>
    <property type="chains" value="P=1-51"/>
</dbReference>
<dbReference type="PDB" id="6LSS">
    <property type="method" value="EM"/>
    <property type="resolution" value="3.23 A"/>
    <property type="chains" value="P=1-51"/>
</dbReference>
<dbReference type="PDB" id="6LU8">
    <property type="method" value="EM"/>
    <property type="resolution" value="3.13 A"/>
    <property type="chains" value="P=1-51"/>
</dbReference>
<dbReference type="PDB" id="6OLE">
    <property type="method" value="EM"/>
    <property type="resolution" value="3.10 A"/>
    <property type="chains" value="m=2-51"/>
</dbReference>
<dbReference type="PDB" id="6OLF">
    <property type="method" value="EM"/>
    <property type="resolution" value="3.90 A"/>
    <property type="chains" value="m=2-51"/>
</dbReference>
<dbReference type="PDB" id="6OLG">
    <property type="method" value="EM"/>
    <property type="resolution" value="3.40 A"/>
    <property type="chains" value="Al=2-51"/>
</dbReference>
<dbReference type="PDB" id="6OLI">
    <property type="method" value="EM"/>
    <property type="resolution" value="3.50 A"/>
    <property type="chains" value="m=2-51"/>
</dbReference>
<dbReference type="PDB" id="6OLZ">
    <property type="method" value="EM"/>
    <property type="resolution" value="3.90 A"/>
    <property type="chains" value="Al=2-51"/>
</dbReference>
<dbReference type="PDB" id="6OM0">
    <property type="method" value="EM"/>
    <property type="resolution" value="3.10 A"/>
    <property type="chains" value="m=2-51"/>
</dbReference>
<dbReference type="PDB" id="6OM7">
    <property type="method" value="EM"/>
    <property type="resolution" value="3.70 A"/>
    <property type="chains" value="m=2-51"/>
</dbReference>
<dbReference type="PDB" id="6QZP">
    <property type="method" value="EM"/>
    <property type="resolution" value="2.90 A"/>
    <property type="chains" value="Ll=2-51"/>
</dbReference>
<dbReference type="PDB" id="6W6L">
    <property type="method" value="EM"/>
    <property type="resolution" value="3.84 A"/>
    <property type="chains" value="m=1-51"/>
</dbReference>
<dbReference type="PDB" id="6XA1">
    <property type="method" value="EM"/>
    <property type="resolution" value="2.80 A"/>
    <property type="chains" value="Ll=2-51"/>
</dbReference>
<dbReference type="PDB" id="6Y0G">
    <property type="method" value="EM"/>
    <property type="resolution" value="3.20 A"/>
    <property type="chains" value="Ll=1-51"/>
</dbReference>
<dbReference type="PDB" id="6Y2L">
    <property type="method" value="EM"/>
    <property type="resolution" value="3.00 A"/>
    <property type="chains" value="Ll=1-51"/>
</dbReference>
<dbReference type="PDB" id="6Y57">
    <property type="method" value="EM"/>
    <property type="resolution" value="3.50 A"/>
    <property type="chains" value="Ll=1-51"/>
</dbReference>
<dbReference type="PDB" id="6Y6X">
    <property type="method" value="EM"/>
    <property type="resolution" value="2.80 A"/>
    <property type="chains" value="Ll=2-51"/>
</dbReference>
<dbReference type="PDB" id="6Z6L">
    <property type="method" value="EM"/>
    <property type="resolution" value="3.00 A"/>
    <property type="chains" value="Ll=1-51"/>
</dbReference>
<dbReference type="PDB" id="6Z6M">
    <property type="method" value="EM"/>
    <property type="resolution" value="3.10 A"/>
    <property type="chains" value="Ll=1-51"/>
</dbReference>
<dbReference type="PDB" id="6Z6N">
    <property type="method" value="EM"/>
    <property type="resolution" value="2.90 A"/>
    <property type="chains" value="Ll=1-51"/>
</dbReference>
<dbReference type="PDB" id="6ZM7">
    <property type="method" value="EM"/>
    <property type="resolution" value="2.70 A"/>
    <property type="chains" value="Ll=1-51"/>
</dbReference>
<dbReference type="PDB" id="6ZME">
    <property type="method" value="EM"/>
    <property type="resolution" value="3.00 A"/>
    <property type="chains" value="Ll=1-51"/>
</dbReference>
<dbReference type="PDB" id="6ZMI">
    <property type="method" value="EM"/>
    <property type="resolution" value="2.60 A"/>
    <property type="chains" value="Ll=1-51"/>
</dbReference>
<dbReference type="PDB" id="6ZMO">
    <property type="method" value="EM"/>
    <property type="resolution" value="3.10 A"/>
    <property type="chains" value="Ll=1-51"/>
</dbReference>
<dbReference type="PDB" id="7BHP">
    <property type="method" value="EM"/>
    <property type="resolution" value="3.30 A"/>
    <property type="chains" value="Ll=1-51"/>
</dbReference>
<dbReference type="PDB" id="7F5S">
    <property type="method" value="EM"/>
    <property type="resolution" value="2.72 A"/>
    <property type="chains" value="Ll=1-51"/>
</dbReference>
<dbReference type="PDB" id="7XNX">
    <property type="method" value="EM"/>
    <property type="resolution" value="2.70 A"/>
    <property type="chains" value="Ll=1-51"/>
</dbReference>
<dbReference type="PDB" id="7XNY">
    <property type="method" value="EM"/>
    <property type="resolution" value="2.50 A"/>
    <property type="chains" value="Ll=1-51"/>
</dbReference>
<dbReference type="PDB" id="8A3D">
    <property type="method" value="EM"/>
    <property type="resolution" value="1.67 A"/>
    <property type="chains" value="f=1-51"/>
</dbReference>
<dbReference type="PDB" id="8FKZ">
    <property type="method" value="EM"/>
    <property type="resolution" value="3.04 A"/>
    <property type="chains" value="LZ=1-51"/>
</dbReference>
<dbReference type="PDB" id="8FL2">
    <property type="method" value="EM"/>
    <property type="resolution" value="2.67 A"/>
    <property type="chains" value="LZ=1-51"/>
</dbReference>
<dbReference type="PDB" id="8FL3">
    <property type="method" value="EM"/>
    <property type="resolution" value="2.53 A"/>
    <property type="chains" value="LZ=1-51"/>
</dbReference>
<dbReference type="PDB" id="8FL4">
    <property type="method" value="EM"/>
    <property type="resolution" value="2.89 A"/>
    <property type="chains" value="LZ=1-51"/>
</dbReference>
<dbReference type="PDB" id="8FL6">
    <property type="method" value="EM"/>
    <property type="resolution" value="2.62 A"/>
    <property type="chains" value="LZ=1-51"/>
</dbReference>
<dbReference type="PDB" id="8FL7">
    <property type="method" value="EM"/>
    <property type="resolution" value="2.55 A"/>
    <property type="chains" value="LZ=1-51"/>
</dbReference>
<dbReference type="PDB" id="8FL9">
    <property type="method" value="EM"/>
    <property type="resolution" value="2.75 A"/>
    <property type="chains" value="LZ=1-51"/>
</dbReference>
<dbReference type="PDB" id="8FLA">
    <property type="method" value="EM"/>
    <property type="resolution" value="2.63 A"/>
    <property type="chains" value="LZ=1-51"/>
</dbReference>
<dbReference type="PDB" id="8FLB">
    <property type="method" value="EM"/>
    <property type="resolution" value="2.55 A"/>
    <property type="chains" value="LZ=1-51"/>
</dbReference>
<dbReference type="PDB" id="8FLC">
    <property type="method" value="EM"/>
    <property type="resolution" value="2.76 A"/>
    <property type="chains" value="LZ=1-51"/>
</dbReference>
<dbReference type="PDB" id="8FLD">
    <property type="method" value="EM"/>
    <property type="resolution" value="2.58 A"/>
    <property type="chains" value="LZ=1-51"/>
</dbReference>
<dbReference type="PDB" id="8FLE">
    <property type="method" value="EM"/>
    <property type="resolution" value="2.48 A"/>
    <property type="chains" value="LZ=1-51"/>
</dbReference>
<dbReference type="PDB" id="8FLF">
    <property type="method" value="EM"/>
    <property type="resolution" value="2.65 A"/>
    <property type="chains" value="LZ=1-51"/>
</dbReference>
<dbReference type="PDB" id="8G5Y">
    <property type="method" value="EM"/>
    <property type="resolution" value="2.29 A"/>
    <property type="chains" value="Ll=1-51"/>
</dbReference>
<dbReference type="PDB" id="8G5Z">
    <property type="method" value="EM"/>
    <property type="resolution" value="2.64 A"/>
    <property type="chains" value="Ll=2-51"/>
</dbReference>
<dbReference type="PDB" id="8G60">
    <property type="method" value="EM"/>
    <property type="resolution" value="2.54 A"/>
    <property type="chains" value="Ll=1-51"/>
</dbReference>
<dbReference type="PDB" id="8G61">
    <property type="method" value="EM"/>
    <property type="resolution" value="2.94 A"/>
    <property type="chains" value="Ll=1-51"/>
</dbReference>
<dbReference type="PDB" id="8G6J">
    <property type="method" value="EM"/>
    <property type="resolution" value="2.80 A"/>
    <property type="chains" value="Ll=1-51"/>
</dbReference>
<dbReference type="PDB" id="8GLP">
    <property type="method" value="EM"/>
    <property type="resolution" value="1.67 A"/>
    <property type="chains" value="Ll=1-51"/>
</dbReference>
<dbReference type="PDB" id="8IDT">
    <property type="method" value="EM"/>
    <property type="resolution" value="2.80 A"/>
    <property type="chains" value="P=1-51"/>
</dbReference>
<dbReference type="PDB" id="8IDY">
    <property type="method" value="EM"/>
    <property type="resolution" value="3.00 A"/>
    <property type="chains" value="P=1-51"/>
</dbReference>
<dbReference type="PDB" id="8IE3">
    <property type="method" value="EM"/>
    <property type="resolution" value="3.30 A"/>
    <property type="chains" value="P=1-51"/>
</dbReference>
<dbReference type="PDB" id="8IFD">
    <property type="method" value="EM"/>
    <property type="resolution" value="2.59 A"/>
    <property type="chains" value="2f=1-51"/>
</dbReference>
<dbReference type="PDB" id="8IFE">
    <property type="method" value="EM"/>
    <property type="resolution" value="2.57 A"/>
    <property type="chains" value="2f=1-51"/>
</dbReference>
<dbReference type="PDB" id="8INE">
    <property type="method" value="EM"/>
    <property type="resolution" value="3.20 A"/>
    <property type="chains" value="P=1-51"/>
</dbReference>
<dbReference type="PDB" id="8INF">
    <property type="method" value="EM"/>
    <property type="resolution" value="3.00 A"/>
    <property type="chains" value="P=1-51"/>
</dbReference>
<dbReference type="PDB" id="8INK">
    <property type="method" value="EM"/>
    <property type="resolution" value="3.20 A"/>
    <property type="chains" value="P=1-51"/>
</dbReference>
<dbReference type="PDB" id="8IPD">
    <property type="method" value="EM"/>
    <property type="resolution" value="3.20 A"/>
    <property type="chains" value="P=1-51"/>
</dbReference>
<dbReference type="PDB" id="8IPX">
    <property type="method" value="EM"/>
    <property type="resolution" value="4.30 A"/>
    <property type="chains" value="P=1-51"/>
</dbReference>
<dbReference type="PDB" id="8IPY">
    <property type="method" value="EM"/>
    <property type="resolution" value="3.20 A"/>
    <property type="chains" value="P=1-51"/>
</dbReference>
<dbReference type="PDB" id="8IR1">
    <property type="method" value="EM"/>
    <property type="resolution" value="3.30 A"/>
    <property type="chains" value="P=1-51"/>
</dbReference>
<dbReference type="PDB" id="8IR3">
    <property type="method" value="EM"/>
    <property type="resolution" value="3.50 A"/>
    <property type="chains" value="P=1-51"/>
</dbReference>
<dbReference type="PDB" id="8JDJ">
    <property type="method" value="EM"/>
    <property type="resolution" value="2.50 A"/>
    <property type="chains" value="q=1-51"/>
</dbReference>
<dbReference type="PDB" id="8JDK">
    <property type="method" value="EM"/>
    <property type="resolution" value="2.26 A"/>
    <property type="chains" value="q=1-51"/>
</dbReference>
<dbReference type="PDB" id="8JDL">
    <property type="method" value="EM"/>
    <property type="resolution" value="2.42 A"/>
    <property type="chains" value="q=1-51"/>
</dbReference>
<dbReference type="PDB" id="8JDM">
    <property type="method" value="EM"/>
    <property type="resolution" value="2.67 A"/>
    <property type="chains" value="q=1-51"/>
</dbReference>
<dbReference type="PDB" id="8K2C">
    <property type="method" value="EM"/>
    <property type="resolution" value="2.40 A"/>
    <property type="chains" value="Ll=1-51"/>
</dbReference>
<dbReference type="PDB" id="8OHD">
    <property type="method" value="EM"/>
    <property type="resolution" value="3.10 A"/>
    <property type="chains" value="Ll=1-51"/>
</dbReference>
<dbReference type="PDB" id="8OJ0">
    <property type="method" value="EM"/>
    <property type="resolution" value="3.30 A"/>
    <property type="chains" value="Ll=1-51"/>
</dbReference>
<dbReference type="PDB" id="8OJ5">
    <property type="method" value="EM"/>
    <property type="resolution" value="2.90 A"/>
    <property type="chains" value="Ll=1-51"/>
</dbReference>
<dbReference type="PDB" id="8OJ8">
    <property type="method" value="EM"/>
    <property type="resolution" value="3.30 A"/>
    <property type="chains" value="Ll=1-51"/>
</dbReference>
<dbReference type="PDB" id="8QFD">
    <property type="method" value="EM"/>
    <property type="resolution" value="2.20 A"/>
    <property type="chains" value="l=1-51"/>
</dbReference>
<dbReference type="PDB" id="8QOI">
    <property type="method" value="EM"/>
    <property type="resolution" value="1.90 A"/>
    <property type="chains" value="Ll=1-51"/>
</dbReference>
<dbReference type="PDB" id="8QYX">
    <property type="method" value="EM"/>
    <property type="resolution" value="1.78 A"/>
    <property type="chains" value="f1=1-51"/>
</dbReference>
<dbReference type="PDB" id="8RL2">
    <property type="method" value="EM"/>
    <property type="resolution" value="2.84 A"/>
    <property type="chains" value="Ll=1-51"/>
</dbReference>
<dbReference type="PDB" id="8UKB">
    <property type="method" value="EM"/>
    <property type="resolution" value="3.05 A"/>
    <property type="chains" value="Ll=2-51"/>
</dbReference>
<dbReference type="PDB" id="8XSX">
    <property type="method" value="EM"/>
    <property type="resolution" value="2.40 A"/>
    <property type="chains" value="Ll=1-51"/>
</dbReference>
<dbReference type="PDB" id="8XSY">
    <property type="method" value="EM"/>
    <property type="resolution" value="3.00 A"/>
    <property type="chains" value="Ll=1-51"/>
</dbReference>
<dbReference type="PDB" id="8XSZ">
    <property type="method" value="EM"/>
    <property type="resolution" value="3.20 A"/>
    <property type="chains" value="Ll=1-51"/>
</dbReference>
<dbReference type="PDB" id="8Y0W">
    <property type="method" value="EM"/>
    <property type="resolution" value="3.40 A"/>
    <property type="chains" value="Ll=1-51"/>
</dbReference>
<dbReference type="PDB" id="8Y0X">
    <property type="method" value="EM"/>
    <property type="resolution" value="3.30 A"/>
    <property type="chains" value="Ll=1-51"/>
</dbReference>
<dbReference type="PDB" id="8YOO">
    <property type="method" value="EM"/>
    <property type="resolution" value="2.00 A"/>
    <property type="chains" value="Ll=1-51"/>
</dbReference>
<dbReference type="PDB" id="8YOP">
    <property type="method" value="EM"/>
    <property type="resolution" value="2.20 A"/>
    <property type="chains" value="Ll=1-51"/>
</dbReference>
<dbReference type="PDB" id="9C3H">
    <property type="method" value="EM"/>
    <property type="resolution" value="2.00 A"/>
    <property type="chains" value="LU=1-51"/>
</dbReference>
<dbReference type="PDB" id="9G8M">
    <property type="method" value="EM"/>
    <property type="resolution" value="3.30 A"/>
    <property type="chains" value="Ll=1-51"/>
</dbReference>
<dbReference type="PDB" id="9GMO">
    <property type="method" value="EM"/>
    <property type="resolution" value="2.59 A"/>
    <property type="chains" value="f=1-51"/>
</dbReference>
<dbReference type="PDBsum" id="4UG0"/>
<dbReference type="PDBsum" id="4V6X"/>
<dbReference type="PDBsum" id="5AJ0"/>
<dbReference type="PDBsum" id="5LKS"/>
<dbReference type="PDBsum" id="5T2C"/>
<dbReference type="PDBsum" id="6IP5"/>
<dbReference type="PDBsum" id="6IP6"/>
<dbReference type="PDBsum" id="6IP8"/>
<dbReference type="PDBsum" id="6LQM"/>
<dbReference type="PDBsum" id="6LSR"/>
<dbReference type="PDBsum" id="6LSS"/>
<dbReference type="PDBsum" id="6LU8"/>
<dbReference type="PDBsum" id="6OLE"/>
<dbReference type="PDBsum" id="6OLF"/>
<dbReference type="PDBsum" id="6OLG"/>
<dbReference type="PDBsum" id="6OLI"/>
<dbReference type="PDBsum" id="6OLZ"/>
<dbReference type="PDBsum" id="6OM0"/>
<dbReference type="PDBsum" id="6OM7"/>
<dbReference type="PDBsum" id="6QZP"/>
<dbReference type="PDBsum" id="6W6L"/>
<dbReference type="PDBsum" id="6XA1"/>
<dbReference type="PDBsum" id="6Y0G"/>
<dbReference type="PDBsum" id="6Y2L"/>
<dbReference type="PDBsum" id="6Y57"/>
<dbReference type="PDBsum" id="6Y6X"/>
<dbReference type="PDBsum" id="6Z6L"/>
<dbReference type="PDBsum" id="6Z6M"/>
<dbReference type="PDBsum" id="6Z6N"/>
<dbReference type="PDBsum" id="6ZM7"/>
<dbReference type="PDBsum" id="6ZME"/>
<dbReference type="PDBsum" id="6ZMI"/>
<dbReference type="PDBsum" id="6ZMO"/>
<dbReference type="PDBsum" id="7BHP"/>
<dbReference type="PDBsum" id="7F5S"/>
<dbReference type="PDBsum" id="7XNX"/>
<dbReference type="PDBsum" id="7XNY"/>
<dbReference type="PDBsum" id="8A3D"/>
<dbReference type="PDBsum" id="8FKZ"/>
<dbReference type="PDBsum" id="8FL2"/>
<dbReference type="PDBsum" id="8FL3"/>
<dbReference type="PDBsum" id="8FL4"/>
<dbReference type="PDBsum" id="8FL6"/>
<dbReference type="PDBsum" id="8FL7"/>
<dbReference type="PDBsum" id="8FL9"/>
<dbReference type="PDBsum" id="8FLA"/>
<dbReference type="PDBsum" id="8FLB"/>
<dbReference type="PDBsum" id="8FLC"/>
<dbReference type="PDBsum" id="8FLD"/>
<dbReference type="PDBsum" id="8FLE"/>
<dbReference type="PDBsum" id="8FLF"/>
<dbReference type="PDBsum" id="8G5Y"/>
<dbReference type="PDBsum" id="8G5Z"/>
<dbReference type="PDBsum" id="8G60"/>
<dbReference type="PDBsum" id="8G61"/>
<dbReference type="PDBsum" id="8G6J"/>
<dbReference type="PDBsum" id="8GLP"/>
<dbReference type="PDBsum" id="8IDT"/>
<dbReference type="PDBsum" id="8IDY"/>
<dbReference type="PDBsum" id="8IE3"/>
<dbReference type="PDBsum" id="8IFD"/>
<dbReference type="PDBsum" id="8IFE"/>
<dbReference type="PDBsum" id="8INE"/>
<dbReference type="PDBsum" id="8INF"/>
<dbReference type="PDBsum" id="8INK"/>
<dbReference type="PDBsum" id="8IPD"/>
<dbReference type="PDBsum" id="8IPX"/>
<dbReference type="PDBsum" id="8IPY"/>
<dbReference type="PDBsum" id="8IR1"/>
<dbReference type="PDBsum" id="8IR3"/>
<dbReference type="PDBsum" id="8JDJ"/>
<dbReference type="PDBsum" id="8JDK"/>
<dbReference type="PDBsum" id="8JDL"/>
<dbReference type="PDBsum" id="8JDM"/>
<dbReference type="PDBsum" id="8K2C"/>
<dbReference type="PDBsum" id="8OHD"/>
<dbReference type="PDBsum" id="8OJ0"/>
<dbReference type="PDBsum" id="8OJ5"/>
<dbReference type="PDBsum" id="8OJ8"/>
<dbReference type="PDBsum" id="8QFD"/>
<dbReference type="PDBsum" id="8QOI"/>
<dbReference type="PDBsum" id="8QYX"/>
<dbReference type="PDBsum" id="8RL2"/>
<dbReference type="PDBsum" id="8UKB"/>
<dbReference type="PDBsum" id="8XSX"/>
<dbReference type="PDBsum" id="8XSY"/>
<dbReference type="PDBsum" id="8XSZ"/>
<dbReference type="PDBsum" id="8Y0W"/>
<dbReference type="PDBsum" id="8Y0X"/>
<dbReference type="PDBsum" id="8YOO"/>
<dbReference type="PDBsum" id="8YOP"/>
<dbReference type="PDBsum" id="9C3H"/>
<dbReference type="PDBsum" id="9G8M"/>
<dbReference type="PDBsum" id="9GMO"/>
<dbReference type="EMDB" id="EMD-0948"/>
<dbReference type="EMDB" id="EMD-0963"/>
<dbReference type="EMDB" id="EMD-0964"/>
<dbReference type="EMDB" id="EMD-0978"/>
<dbReference type="EMDB" id="EMD-10668"/>
<dbReference type="EMDB" id="EMD-10674"/>
<dbReference type="EMDB" id="EMD-10690"/>
<dbReference type="EMDB" id="EMD-10709"/>
<dbReference type="EMDB" id="EMD-11098"/>
<dbReference type="EMDB" id="EMD-11099"/>
<dbReference type="EMDB" id="EMD-11100"/>
<dbReference type="EMDB" id="EMD-11288"/>
<dbReference type="EMDB" id="EMD-11289"/>
<dbReference type="EMDB" id="EMD-11292"/>
<dbReference type="EMDB" id="EMD-11299"/>
<dbReference type="EMDB" id="EMD-12189"/>
<dbReference type="EMDB" id="EMD-15113"/>
<dbReference type="EMDB" id="EMD-16880"/>
<dbReference type="EMDB" id="EMD-16902"/>
<dbReference type="EMDB" id="EMD-16905"/>
<dbReference type="EMDB" id="EMD-16908"/>
<dbReference type="EMDB" id="EMD-18382"/>
<dbReference type="EMDB" id="EMD-18539"/>
<dbReference type="EMDB" id="EMD-18765"/>
<dbReference type="EMDB" id="EMD-19330"/>
<dbReference type="EMDB" id="EMD-29262"/>
<dbReference type="EMDB" id="EMD-29265"/>
<dbReference type="EMDB" id="EMD-29266"/>
<dbReference type="EMDB" id="EMD-29267"/>
<dbReference type="EMDB" id="EMD-29268"/>
<dbReference type="EMDB" id="EMD-29269"/>
<dbReference type="EMDB" id="EMD-29271"/>
<dbReference type="EMDB" id="EMD-29272"/>
<dbReference type="EMDB" id="EMD-29273"/>
<dbReference type="EMDB" id="EMD-29274"/>
<dbReference type="EMDB" id="EMD-29275"/>
<dbReference type="EMDB" id="EMD-29276"/>
<dbReference type="EMDB" id="EMD-29277"/>
<dbReference type="EMDB" id="EMD-29757"/>
<dbReference type="EMDB" id="EMD-29758"/>
<dbReference type="EMDB" id="EMD-29759"/>
<dbReference type="EMDB" id="EMD-29760"/>
<dbReference type="EMDB" id="EMD-29771"/>
<dbReference type="EMDB" id="EMD-31465"/>
<dbReference type="EMDB" id="EMD-33329"/>
<dbReference type="EMDB" id="EMD-33330"/>
<dbReference type="EMDB" id="EMD-35370"/>
<dbReference type="EMDB" id="EMD-35371"/>
<dbReference type="EMDB" id="EMD-35375"/>
<dbReference type="EMDB" id="EMD-35413"/>
<dbReference type="EMDB" id="EMD-35414"/>
<dbReference type="EMDB" id="EMD-35596"/>
<dbReference type="EMDB" id="EMD-35597"/>
<dbReference type="EMDB" id="EMD-35599"/>
<dbReference type="EMDB" id="EMD-35639"/>
<dbReference type="EMDB" id="EMD-35649"/>
<dbReference type="EMDB" id="EMD-35651"/>
<dbReference type="EMDB" id="EMD-35672"/>
<dbReference type="EMDB" id="EMD-35673"/>
<dbReference type="EMDB" id="EMD-36178"/>
<dbReference type="EMDB" id="EMD-36179"/>
<dbReference type="EMDB" id="EMD-36180"/>
<dbReference type="EMDB" id="EMD-36181"/>
<dbReference type="EMDB" id="EMD-36838"/>
<dbReference type="EMDB" id="EMD-38629"/>
<dbReference type="EMDB" id="EMD-38630"/>
<dbReference type="EMDB" id="EMD-38631"/>
<dbReference type="EMDB" id="EMD-39455"/>
<dbReference type="EMDB" id="EMD-39456"/>
<dbReference type="EMDB" id="EMD-40205"/>
<dbReference type="EMDB" id="EMD-4070"/>
<dbReference type="EMDB" id="EMD-42351"/>
<dbReference type="EMDB" id="EMD-45170"/>
<dbReference type="EMDB" id="EMD-51132"/>
<dbReference type="EMDB" id="EMD-51452"/>
<dbReference type="EMDB" id="EMD-9701"/>
<dbReference type="EMDB" id="EMD-9702"/>
<dbReference type="EMDB" id="EMD-9703"/>
<dbReference type="SMR" id="P62891"/>
<dbReference type="BioGRID" id="112089">
    <property type="interactions" value="116"/>
</dbReference>
<dbReference type="ComplexPortal" id="CPX-5183">
    <property type="entry name" value="60S cytosolic large ribosomal subunit"/>
</dbReference>
<dbReference type="ComplexPortal" id="CPX-7665">
    <property type="entry name" value="60S cytosolic large ribosomal subunit, striated muscle variant"/>
</dbReference>
<dbReference type="CORUM" id="P62891"/>
<dbReference type="FunCoup" id="P62891">
    <property type="interactions" value="1113"/>
</dbReference>
<dbReference type="IntAct" id="P62891">
    <property type="interactions" value="40"/>
</dbReference>
<dbReference type="MINT" id="P62891"/>
<dbReference type="STRING" id="9606.ENSP00000355315"/>
<dbReference type="GlyGen" id="P62891">
    <property type="glycosylation" value="1 site, 1 O-linked glycan (1 site)"/>
</dbReference>
<dbReference type="iPTMnet" id="P62891"/>
<dbReference type="PhosphoSitePlus" id="P62891"/>
<dbReference type="BioMuta" id="RPL39"/>
<dbReference type="DMDM" id="51702812"/>
<dbReference type="jPOST" id="P62891"/>
<dbReference type="MassIVE" id="P62891"/>
<dbReference type="PaxDb" id="9606-ENSP00000355315"/>
<dbReference type="PeptideAtlas" id="P62891"/>
<dbReference type="ProteomicsDB" id="57446"/>
<dbReference type="Pumba" id="P62891"/>
<dbReference type="TopDownProteomics" id="P62891"/>
<dbReference type="Antibodypedia" id="29833">
    <property type="antibodies" value="158 antibodies from 26 providers"/>
</dbReference>
<dbReference type="DNASU" id="6170"/>
<dbReference type="Ensembl" id="ENST00000361575.4">
    <property type="protein sequence ID" value="ENSP00000355315.3"/>
    <property type="gene ID" value="ENSG00000198918.8"/>
</dbReference>
<dbReference type="GeneID" id="6170"/>
<dbReference type="KEGG" id="hsa:6170"/>
<dbReference type="MANE-Select" id="ENST00000361575.4">
    <property type="protein sequence ID" value="ENSP00000355315.3"/>
    <property type="RefSeq nucleotide sequence ID" value="NM_001000.4"/>
    <property type="RefSeq protein sequence ID" value="NP_000991.1"/>
</dbReference>
<dbReference type="UCSC" id="uc004erx.3">
    <property type="organism name" value="human"/>
</dbReference>
<dbReference type="AGR" id="HGNC:10350"/>
<dbReference type="CTD" id="6170"/>
<dbReference type="DisGeNET" id="6170"/>
<dbReference type="GeneCards" id="RPL39"/>
<dbReference type="HGNC" id="HGNC:10350">
    <property type="gene designation" value="RPL39"/>
</dbReference>
<dbReference type="HPA" id="ENSG00000198918">
    <property type="expression patterns" value="Low tissue specificity"/>
</dbReference>
<dbReference type="MIM" id="300899">
    <property type="type" value="gene"/>
</dbReference>
<dbReference type="neXtProt" id="NX_P62891"/>
<dbReference type="OpenTargets" id="ENSG00000198918"/>
<dbReference type="PharmGKB" id="PA34743"/>
<dbReference type="VEuPathDB" id="HostDB:ENSG00000198918"/>
<dbReference type="eggNOG" id="KOG0002">
    <property type="taxonomic scope" value="Eukaryota"/>
</dbReference>
<dbReference type="GeneTree" id="ENSGT00390000014814"/>
<dbReference type="HOGENOM" id="CLU_181948_3_0_1"/>
<dbReference type="InParanoid" id="P62891"/>
<dbReference type="OMA" id="RRTKMNI"/>
<dbReference type="OrthoDB" id="9943805at2759"/>
<dbReference type="PAN-GO" id="P62891">
    <property type="GO annotations" value="1 GO annotation based on evolutionary models"/>
</dbReference>
<dbReference type="PhylomeDB" id="P62891"/>
<dbReference type="TreeFam" id="TF300223"/>
<dbReference type="PathwayCommons" id="P62891"/>
<dbReference type="Reactome" id="R-HSA-156827">
    <property type="pathway name" value="L13a-mediated translational silencing of Ceruloplasmin expression"/>
</dbReference>
<dbReference type="Reactome" id="R-HSA-156902">
    <property type="pathway name" value="Peptide chain elongation"/>
</dbReference>
<dbReference type="Reactome" id="R-HSA-1799339">
    <property type="pathway name" value="SRP-dependent cotranslational protein targeting to membrane"/>
</dbReference>
<dbReference type="Reactome" id="R-HSA-192823">
    <property type="pathway name" value="Viral mRNA Translation"/>
</dbReference>
<dbReference type="Reactome" id="R-HSA-2408557">
    <property type="pathway name" value="Selenocysteine synthesis"/>
</dbReference>
<dbReference type="Reactome" id="R-HSA-6791226">
    <property type="pathway name" value="Major pathway of rRNA processing in the nucleolus and cytosol"/>
</dbReference>
<dbReference type="Reactome" id="R-HSA-72689">
    <property type="pathway name" value="Formation of a pool of free 40S subunits"/>
</dbReference>
<dbReference type="Reactome" id="R-HSA-72706">
    <property type="pathway name" value="GTP hydrolysis and joining of the 60S ribosomal subunit"/>
</dbReference>
<dbReference type="Reactome" id="R-HSA-72764">
    <property type="pathway name" value="Eukaryotic Translation Termination"/>
</dbReference>
<dbReference type="Reactome" id="R-HSA-9010553">
    <property type="pathway name" value="Regulation of expression of SLITs and ROBOs"/>
</dbReference>
<dbReference type="Reactome" id="R-HSA-9633012">
    <property type="pathway name" value="Response of EIF2AK4 (GCN2) to amino acid deficiency"/>
</dbReference>
<dbReference type="Reactome" id="R-HSA-975956">
    <property type="pathway name" value="Nonsense Mediated Decay (NMD) independent of the Exon Junction Complex (EJC)"/>
</dbReference>
<dbReference type="Reactome" id="R-HSA-975957">
    <property type="pathway name" value="Nonsense Mediated Decay (NMD) enhanced by the Exon Junction Complex (EJC)"/>
</dbReference>
<dbReference type="SignaLink" id="P62891"/>
<dbReference type="SIGNOR" id="P62891"/>
<dbReference type="BioGRID-ORCS" id="6170">
    <property type="hits" value="50 hits in 274 CRISPR screens"/>
</dbReference>
<dbReference type="CD-CODE" id="91857CE7">
    <property type="entry name" value="Nucleolus"/>
</dbReference>
<dbReference type="ChiTaRS" id="RPL39">
    <property type="organism name" value="human"/>
</dbReference>
<dbReference type="GeneWiki" id="RPL39"/>
<dbReference type="GenomeRNAi" id="6170"/>
<dbReference type="Pharos" id="P62891">
    <property type="development level" value="Tbio"/>
</dbReference>
<dbReference type="PRO" id="PR:P62891"/>
<dbReference type="Proteomes" id="UP000005640">
    <property type="component" value="Chromosome X"/>
</dbReference>
<dbReference type="RNAct" id="P62891">
    <property type="molecule type" value="protein"/>
</dbReference>
<dbReference type="Bgee" id="ENSG00000198918">
    <property type="expression patterns" value="Expressed in ganglionic eminence and 99 other cell types or tissues"/>
</dbReference>
<dbReference type="GO" id="GO:0005829">
    <property type="term" value="C:cytosol"/>
    <property type="evidence" value="ECO:0000304"/>
    <property type="project" value="Reactome"/>
</dbReference>
<dbReference type="GO" id="GO:0022625">
    <property type="term" value="C:cytosolic large ribosomal subunit"/>
    <property type="evidence" value="ECO:0000314"/>
    <property type="project" value="UniProtKB"/>
</dbReference>
<dbReference type="GO" id="GO:0022626">
    <property type="term" value="C:cytosolic ribosome"/>
    <property type="evidence" value="ECO:0000314"/>
    <property type="project" value="FlyBase"/>
</dbReference>
<dbReference type="GO" id="GO:0005615">
    <property type="term" value="C:extracellular space"/>
    <property type="evidence" value="ECO:0000314"/>
    <property type="project" value="UniProtKB"/>
</dbReference>
<dbReference type="GO" id="GO:0003723">
    <property type="term" value="F:RNA binding"/>
    <property type="evidence" value="ECO:0000304"/>
    <property type="project" value="UniProtKB"/>
</dbReference>
<dbReference type="GO" id="GO:0003735">
    <property type="term" value="F:structural constituent of ribosome"/>
    <property type="evidence" value="ECO:0000314"/>
    <property type="project" value="UniProtKB"/>
</dbReference>
<dbReference type="GO" id="GO:0019731">
    <property type="term" value="P:antibacterial humoral response"/>
    <property type="evidence" value="ECO:0000314"/>
    <property type="project" value="UniProtKB"/>
</dbReference>
<dbReference type="GO" id="GO:0061844">
    <property type="term" value="P:antimicrobial humoral immune response mediated by antimicrobial peptide"/>
    <property type="evidence" value="ECO:0000314"/>
    <property type="project" value="UniProtKB"/>
</dbReference>
<dbReference type="GO" id="GO:0002181">
    <property type="term" value="P:cytoplasmic translation"/>
    <property type="evidence" value="ECO:0000314"/>
    <property type="project" value="UniProtKB"/>
</dbReference>
<dbReference type="GO" id="GO:0050830">
    <property type="term" value="P:defense response to Gram-positive bacterium"/>
    <property type="evidence" value="ECO:0000314"/>
    <property type="project" value="UniProtKB"/>
</dbReference>
<dbReference type="GO" id="GO:0002227">
    <property type="term" value="P:innate immune response in mucosa"/>
    <property type="evidence" value="ECO:0000314"/>
    <property type="project" value="UniProtKB"/>
</dbReference>
<dbReference type="GO" id="GO:0006412">
    <property type="term" value="P:translation"/>
    <property type="evidence" value="ECO:0000304"/>
    <property type="project" value="UniProtKB"/>
</dbReference>
<dbReference type="FunFam" id="1.10.1620.10:FF:000001">
    <property type="entry name" value="60S ribosomal protein-like L39"/>
    <property type="match status" value="1"/>
</dbReference>
<dbReference type="Gene3D" id="1.10.1620.10">
    <property type="entry name" value="Ribosomal protein L39e"/>
    <property type="match status" value="1"/>
</dbReference>
<dbReference type="HAMAP" id="MF_00629">
    <property type="entry name" value="Ribosomal_eL39"/>
    <property type="match status" value="1"/>
</dbReference>
<dbReference type="InterPro" id="IPR000077">
    <property type="entry name" value="Ribosomal_eL39"/>
</dbReference>
<dbReference type="InterPro" id="IPR020083">
    <property type="entry name" value="Ribosomal_eL39_CS"/>
</dbReference>
<dbReference type="InterPro" id="IPR023626">
    <property type="entry name" value="Ribosomal_eL39_dom_sf"/>
</dbReference>
<dbReference type="PANTHER" id="PTHR19970:SF0">
    <property type="entry name" value="LARGE RIBOSOMAL SUBUNIT PROTEIN EL39"/>
    <property type="match status" value="1"/>
</dbReference>
<dbReference type="PANTHER" id="PTHR19970">
    <property type="entry name" value="RIBOSOMAL PROTEIN L39E"/>
    <property type="match status" value="1"/>
</dbReference>
<dbReference type="Pfam" id="PF00832">
    <property type="entry name" value="Ribosomal_L39"/>
    <property type="match status" value="1"/>
</dbReference>
<dbReference type="SUPFAM" id="SSF48662">
    <property type="entry name" value="Ribosomal protein L39e"/>
    <property type="match status" value="1"/>
</dbReference>
<dbReference type="PROSITE" id="PS00051">
    <property type="entry name" value="RIBOSOMAL_L39E"/>
    <property type="match status" value="1"/>
</dbReference>
<proteinExistence type="evidence at protein level"/>
<sequence>MSSHKTFRIKRFLAKKQKQNRPIPQWIRMKTGNKIRYNSKRRHWRRTKLGL</sequence>